<accession>P39784</accession>
<evidence type="ECO:0000250" key="1"/>
<name>PCF_BACSU</name>
<organism>
    <name type="scientific">Bacillus subtilis (strain 168)</name>
    <dbReference type="NCBI Taxonomy" id="224308"/>
    <lineage>
        <taxon>Bacteria</taxon>
        <taxon>Bacillati</taxon>
        <taxon>Bacillota</taxon>
        <taxon>Bacilli</taxon>
        <taxon>Bacillales</taxon>
        <taxon>Bacillaceae</taxon>
        <taxon>Bacillus</taxon>
    </lineage>
</organism>
<comment type="function">
    <text>Positive regulatory protein that acts at the late promoter PL.</text>
</comment>
<sequence>MQDLLFEYKRTLKQTRIQYKPLAEADESVLSAEELKDKKIIRNMITDLEYVTEWLEKGRQPGIRRAIDRRDVYQRLMIKDPRIIESFSSAMMFEPDGQVSEEDRDRIREALALLTDREKEMFLLHKVECFSYERIADLLGVKKSTVQTTIKRASLKMQRQQEEMNRSLA</sequence>
<feature type="chain" id="PRO_0000058248" description="Positive control factor">
    <location>
        <begin position="1"/>
        <end position="169"/>
    </location>
</feature>
<feature type="DNA-binding region" description="H-T-H motif" evidence="1">
    <location>
        <begin position="132"/>
        <end position="157"/>
    </location>
</feature>
<keyword id="KW-0010">Activator</keyword>
<keyword id="KW-0238">DNA-binding</keyword>
<keyword id="KW-1185">Reference proteome</keyword>
<keyword id="KW-0804">Transcription</keyword>
<keyword id="KW-0805">Transcription regulation</keyword>
<reference key="1">
    <citation type="journal article" date="1994" name="J. Bacteriol.">
        <title>Genetic control of bacterial suicide: regulation of the induction of PBSX in Bacillus subtilis.</title>
        <authorList>
            <person name="McDonnell G.E."/>
            <person name="Wood H."/>
            <person name="Devine K.M."/>
            <person name="McConnell D.J."/>
        </authorList>
    </citation>
    <scope>NUCLEOTIDE SEQUENCE [GENOMIC DNA]</scope>
    <source>
        <strain>168 / SO113</strain>
    </source>
</reference>
<reference key="2">
    <citation type="submission" date="1996-03" db="EMBL/GenBank/DDBJ databases">
        <authorList>
            <person name="Krogh S."/>
            <person name="O'Reilly M."/>
            <person name="Nolan N."/>
            <person name="Devine K.M."/>
        </authorList>
    </citation>
    <scope>NUCLEOTIDE SEQUENCE [GENOMIC DNA]</scope>
    <source>
        <strain>168</strain>
    </source>
</reference>
<reference key="3">
    <citation type="journal article" date="1997" name="Nature">
        <title>The complete genome sequence of the Gram-positive bacterium Bacillus subtilis.</title>
        <authorList>
            <person name="Kunst F."/>
            <person name="Ogasawara N."/>
            <person name="Moszer I."/>
            <person name="Albertini A.M."/>
            <person name="Alloni G."/>
            <person name="Azevedo V."/>
            <person name="Bertero M.G."/>
            <person name="Bessieres P."/>
            <person name="Bolotin A."/>
            <person name="Borchert S."/>
            <person name="Borriss R."/>
            <person name="Boursier L."/>
            <person name="Brans A."/>
            <person name="Braun M."/>
            <person name="Brignell S.C."/>
            <person name="Bron S."/>
            <person name="Brouillet S."/>
            <person name="Bruschi C.V."/>
            <person name="Caldwell B."/>
            <person name="Capuano V."/>
            <person name="Carter N.M."/>
            <person name="Choi S.-K."/>
            <person name="Codani J.-J."/>
            <person name="Connerton I.F."/>
            <person name="Cummings N.J."/>
            <person name="Daniel R.A."/>
            <person name="Denizot F."/>
            <person name="Devine K.M."/>
            <person name="Duesterhoeft A."/>
            <person name="Ehrlich S.D."/>
            <person name="Emmerson P.T."/>
            <person name="Entian K.-D."/>
            <person name="Errington J."/>
            <person name="Fabret C."/>
            <person name="Ferrari E."/>
            <person name="Foulger D."/>
            <person name="Fritz C."/>
            <person name="Fujita M."/>
            <person name="Fujita Y."/>
            <person name="Fuma S."/>
            <person name="Galizzi A."/>
            <person name="Galleron N."/>
            <person name="Ghim S.-Y."/>
            <person name="Glaser P."/>
            <person name="Goffeau A."/>
            <person name="Golightly E.J."/>
            <person name="Grandi G."/>
            <person name="Guiseppi G."/>
            <person name="Guy B.J."/>
            <person name="Haga K."/>
            <person name="Haiech J."/>
            <person name="Harwood C.R."/>
            <person name="Henaut A."/>
            <person name="Hilbert H."/>
            <person name="Holsappel S."/>
            <person name="Hosono S."/>
            <person name="Hullo M.-F."/>
            <person name="Itaya M."/>
            <person name="Jones L.-M."/>
            <person name="Joris B."/>
            <person name="Karamata D."/>
            <person name="Kasahara Y."/>
            <person name="Klaerr-Blanchard M."/>
            <person name="Klein C."/>
            <person name="Kobayashi Y."/>
            <person name="Koetter P."/>
            <person name="Koningstein G."/>
            <person name="Krogh S."/>
            <person name="Kumano M."/>
            <person name="Kurita K."/>
            <person name="Lapidus A."/>
            <person name="Lardinois S."/>
            <person name="Lauber J."/>
            <person name="Lazarevic V."/>
            <person name="Lee S.-M."/>
            <person name="Levine A."/>
            <person name="Liu H."/>
            <person name="Masuda S."/>
            <person name="Mauel C."/>
            <person name="Medigue C."/>
            <person name="Medina N."/>
            <person name="Mellado R.P."/>
            <person name="Mizuno M."/>
            <person name="Moestl D."/>
            <person name="Nakai S."/>
            <person name="Noback M."/>
            <person name="Noone D."/>
            <person name="O'Reilly M."/>
            <person name="Ogawa K."/>
            <person name="Ogiwara A."/>
            <person name="Oudega B."/>
            <person name="Park S.-H."/>
            <person name="Parro V."/>
            <person name="Pohl T.M."/>
            <person name="Portetelle D."/>
            <person name="Porwollik S."/>
            <person name="Prescott A.M."/>
            <person name="Presecan E."/>
            <person name="Pujic P."/>
            <person name="Purnelle B."/>
            <person name="Rapoport G."/>
            <person name="Rey M."/>
            <person name="Reynolds S."/>
            <person name="Rieger M."/>
            <person name="Rivolta C."/>
            <person name="Rocha E."/>
            <person name="Roche B."/>
            <person name="Rose M."/>
            <person name="Sadaie Y."/>
            <person name="Sato T."/>
            <person name="Scanlan E."/>
            <person name="Schleich S."/>
            <person name="Schroeter R."/>
            <person name="Scoffone F."/>
            <person name="Sekiguchi J."/>
            <person name="Sekowska A."/>
            <person name="Seror S.J."/>
            <person name="Serror P."/>
            <person name="Shin B.-S."/>
            <person name="Soldo B."/>
            <person name="Sorokin A."/>
            <person name="Tacconi E."/>
            <person name="Takagi T."/>
            <person name="Takahashi H."/>
            <person name="Takemaru K."/>
            <person name="Takeuchi M."/>
            <person name="Tamakoshi A."/>
            <person name="Tanaka T."/>
            <person name="Terpstra P."/>
            <person name="Tognoni A."/>
            <person name="Tosato V."/>
            <person name="Uchiyama S."/>
            <person name="Vandenbol M."/>
            <person name="Vannier F."/>
            <person name="Vassarotti A."/>
            <person name="Viari A."/>
            <person name="Wambutt R."/>
            <person name="Wedler E."/>
            <person name="Wedler H."/>
            <person name="Weitzenegger T."/>
            <person name="Winters P."/>
            <person name="Wipat A."/>
            <person name="Yamamoto H."/>
            <person name="Yamane K."/>
            <person name="Yasumoto K."/>
            <person name="Yata K."/>
            <person name="Yoshida K."/>
            <person name="Yoshikawa H.-F."/>
            <person name="Zumstein E."/>
            <person name="Yoshikawa H."/>
            <person name="Danchin A."/>
        </authorList>
    </citation>
    <scope>NUCLEOTIDE SEQUENCE [LARGE SCALE GENOMIC DNA]</scope>
    <source>
        <strain>168</strain>
    </source>
</reference>
<gene>
    <name type="primary">xpf</name>
    <name type="synonym">pcf</name>
    <name type="synonym">ykxE</name>
    <name type="ordered locus">BSU12560</name>
</gene>
<dbReference type="EMBL" id="Z34287">
    <property type="protein sequence ID" value="CAA84046.1"/>
    <property type="molecule type" value="Genomic_DNA"/>
</dbReference>
<dbReference type="EMBL" id="Z70177">
    <property type="protein sequence ID" value="CAA94057.1"/>
    <property type="molecule type" value="Genomic_DNA"/>
</dbReference>
<dbReference type="EMBL" id="AL009126">
    <property type="protein sequence ID" value="CAB13113.1"/>
    <property type="molecule type" value="Genomic_DNA"/>
</dbReference>
<dbReference type="PIR" id="I40413">
    <property type="entry name" value="I40413"/>
</dbReference>
<dbReference type="RefSeq" id="NP_389138.1">
    <property type="nucleotide sequence ID" value="NC_000964.3"/>
</dbReference>
<dbReference type="RefSeq" id="WP_003245797.1">
    <property type="nucleotide sequence ID" value="NZ_OZ025638.1"/>
</dbReference>
<dbReference type="SMR" id="P39784"/>
<dbReference type="FunCoup" id="P39784">
    <property type="interactions" value="230"/>
</dbReference>
<dbReference type="STRING" id="224308.BSU12560"/>
<dbReference type="PaxDb" id="224308-BSU12560"/>
<dbReference type="EnsemblBacteria" id="CAB13113">
    <property type="protein sequence ID" value="CAB13113"/>
    <property type="gene ID" value="BSU_12560"/>
</dbReference>
<dbReference type="GeneID" id="936474"/>
<dbReference type="KEGG" id="bsu:BSU12560"/>
<dbReference type="PATRIC" id="fig|224308.179.peg.1360"/>
<dbReference type="eggNOG" id="COG1595">
    <property type="taxonomic scope" value="Bacteria"/>
</dbReference>
<dbReference type="InParanoid" id="P39784"/>
<dbReference type="OrthoDB" id="2083683at2"/>
<dbReference type="BioCyc" id="BSUB:BSU12560-MONOMER"/>
<dbReference type="Proteomes" id="UP000001570">
    <property type="component" value="Chromosome"/>
</dbReference>
<dbReference type="GO" id="GO:0003677">
    <property type="term" value="F:DNA binding"/>
    <property type="evidence" value="ECO:0007669"/>
    <property type="project" value="UniProtKB-KW"/>
</dbReference>
<dbReference type="GO" id="GO:0016987">
    <property type="term" value="F:sigma factor activity"/>
    <property type="evidence" value="ECO:0007669"/>
    <property type="project" value="InterPro"/>
</dbReference>
<dbReference type="GO" id="GO:0006352">
    <property type="term" value="P:DNA-templated transcription initiation"/>
    <property type="evidence" value="ECO:0007669"/>
    <property type="project" value="InterPro"/>
</dbReference>
<dbReference type="CDD" id="cd06171">
    <property type="entry name" value="Sigma70_r4"/>
    <property type="match status" value="1"/>
</dbReference>
<dbReference type="Gene3D" id="1.10.10.10">
    <property type="entry name" value="Winged helix-like DNA-binding domain superfamily/Winged helix DNA-binding domain"/>
    <property type="match status" value="1"/>
</dbReference>
<dbReference type="InterPro" id="IPR014284">
    <property type="entry name" value="RNA_pol_sigma-70_dom"/>
</dbReference>
<dbReference type="InterPro" id="IPR013249">
    <property type="entry name" value="RNA_pol_sigma70_r4_t2"/>
</dbReference>
<dbReference type="InterPro" id="IPR013324">
    <property type="entry name" value="RNA_pol_sigma_r3/r4-like"/>
</dbReference>
<dbReference type="InterPro" id="IPR036388">
    <property type="entry name" value="WH-like_DNA-bd_sf"/>
</dbReference>
<dbReference type="NCBIfam" id="NF005385">
    <property type="entry name" value="PRK06930.1"/>
    <property type="match status" value="1"/>
</dbReference>
<dbReference type="NCBIfam" id="TIGR02937">
    <property type="entry name" value="sigma70-ECF"/>
    <property type="match status" value="1"/>
</dbReference>
<dbReference type="Pfam" id="PF08281">
    <property type="entry name" value="Sigma70_r4_2"/>
    <property type="match status" value="1"/>
</dbReference>
<dbReference type="SUPFAM" id="SSF88659">
    <property type="entry name" value="Sigma3 and sigma4 domains of RNA polymerase sigma factors"/>
    <property type="match status" value="1"/>
</dbReference>
<protein>
    <recommendedName>
        <fullName>Positive control factor</fullName>
    </recommendedName>
</protein>
<proteinExistence type="predicted"/>